<gene>
    <name type="ordered locus">At2g36240</name>
    <name type="ORF">F2H17.15</name>
</gene>
<accession>Q9SJN2</accession>
<accession>Q0WVA7</accession>
<accession>Q6ICY0</accession>
<comment type="similarity">
    <text evidence="1">Belongs to the PPR family. P subfamily.</text>
</comment>
<comment type="sequence caution" evidence="1">
    <conflict type="erroneous initiation">
        <sequence resource="EMBL-CDS" id="AAT44969"/>
    </conflict>
</comment>
<comment type="online information" name="Pentatricopeptide repeat proteins">
    <link uri="https://ppr.plantenergy.uwa.edu.au"/>
</comment>
<evidence type="ECO:0000305" key="1"/>
<keyword id="KW-1185">Reference proteome</keyword>
<keyword id="KW-0677">Repeat</keyword>
<reference key="1">
    <citation type="journal article" date="1999" name="Nature">
        <title>Sequence and analysis of chromosome 2 of the plant Arabidopsis thaliana.</title>
        <authorList>
            <person name="Lin X."/>
            <person name="Kaul S."/>
            <person name="Rounsley S.D."/>
            <person name="Shea T.P."/>
            <person name="Benito M.-I."/>
            <person name="Town C.D."/>
            <person name="Fujii C.Y."/>
            <person name="Mason T.M."/>
            <person name="Bowman C.L."/>
            <person name="Barnstead M.E."/>
            <person name="Feldblyum T.V."/>
            <person name="Buell C.R."/>
            <person name="Ketchum K.A."/>
            <person name="Lee J.J."/>
            <person name="Ronning C.M."/>
            <person name="Koo H.L."/>
            <person name="Moffat K.S."/>
            <person name="Cronin L.A."/>
            <person name="Shen M."/>
            <person name="Pai G."/>
            <person name="Van Aken S."/>
            <person name="Umayam L."/>
            <person name="Tallon L.J."/>
            <person name="Gill J.E."/>
            <person name="Adams M.D."/>
            <person name="Carrera A.J."/>
            <person name="Creasy T.H."/>
            <person name="Goodman H.M."/>
            <person name="Somerville C.R."/>
            <person name="Copenhaver G.P."/>
            <person name="Preuss D."/>
            <person name="Nierman W.C."/>
            <person name="White O."/>
            <person name="Eisen J.A."/>
            <person name="Salzberg S.L."/>
            <person name="Fraser C.M."/>
            <person name="Venter J.C."/>
        </authorList>
    </citation>
    <scope>NUCLEOTIDE SEQUENCE [LARGE SCALE GENOMIC DNA]</scope>
    <source>
        <strain>cv. Columbia</strain>
    </source>
</reference>
<reference key="2">
    <citation type="journal article" date="2017" name="Plant J.">
        <title>Araport11: a complete reannotation of the Arabidopsis thaliana reference genome.</title>
        <authorList>
            <person name="Cheng C.Y."/>
            <person name="Krishnakumar V."/>
            <person name="Chan A.P."/>
            <person name="Thibaud-Nissen F."/>
            <person name="Schobel S."/>
            <person name="Town C.D."/>
        </authorList>
    </citation>
    <scope>GENOME REANNOTATION</scope>
    <source>
        <strain>cv. Columbia</strain>
    </source>
</reference>
<reference key="3">
    <citation type="submission" date="2006-07" db="EMBL/GenBank/DDBJ databases">
        <title>Large-scale analysis of RIKEN Arabidopsis full-length (RAFL) cDNAs.</title>
        <authorList>
            <person name="Totoki Y."/>
            <person name="Seki M."/>
            <person name="Ishida J."/>
            <person name="Nakajima M."/>
            <person name="Enju A."/>
            <person name="Kamiya A."/>
            <person name="Narusaka M."/>
            <person name="Shin-i T."/>
            <person name="Nakagawa M."/>
            <person name="Sakamoto N."/>
            <person name="Oishi K."/>
            <person name="Kohara Y."/>
            <person name="Kobayashi M."/>
            <person name="Toyoda A."/>
            <person name="Sakaki Y."/>
            <person name="Sakurai T."/>
            <person name="Iida K."/>
            <person name="Akiyama K."/>
            <person name="Satou M."/>
            <person name="Toyoda T."/>
            <person name="Konagaya A."/>
            <person name="Carninci P."/>
            <person name="Kawai J."/>
            <person name="Hayashizaki Y."/>
            <person name="Shinozaki K."/>
        </authorList>
    </citation>
    <scope>NUCLEOTIDE SEQUENCE [LARGE SCALE MRNA]</scope>
    <source>
        <strain>cv. Columbia</strain>
    </source>
</reference>
<reference key="4">
    <citation type="submission" date="2004-07" db="EMBL/GenBank/DDBJ databases">
        <title>Arabidopsis ORF clones.</title>
        <authorList>
            <person name="Shinn P."/>
            <person name="Chen H."/>
            <person name="Cheuk R.F."/>
            <person name="Kim C.J."/>
            <person name="Ecker J.R."/>
        </authorList>
    </citation>
    <scope>NUCLEOTIDE SEQUENCE [LARGE SCALE MRNA] OF 10-497</scope>
    <source>
        <strain>cv. Columbia</strain>
    </source>
</reference>
<reference key="5">
    <citation type="journal article" date="2004" name="Plant Cell">
        <title>Genome-wide analysis of Arabidopsis pentatricopeptide repeat proteins reveals their essential role in organelle biogenesis.</title>
        <authorList>
            <person name="Lurin C."/>
            <person name="Andres C."/>
            <person name="Aubourg S."/>
            <person name="Bellaoui M."/>
            <person name="Bitton F."/>
            <person name="Bruyere C."/>
            <person name="Caboche M."/>
            <person name="Debast C."/>
            <person name="Gualberto J."/>
            <person name="Hoffmann B."/>
            <person name="Lecharny A."/>
            <person name="Le Ret M."/>
            <person name="Martin-Magniette M.-L."/>
            <person name="Mireau H."/>
            <person name="Peeters N."/>
            <person name="Renou J.-P."/>
            <person name="Szurek B."/>
            <person name="Taconnat L."/>
            <person name="Small I."/>
        </authorList>
    </citation>
    <scope>GENE FAMILY</scope>
</reference>
<name>PP187_ARATH</name>
<feature type="chain" id="PRO_0000356046" description="Pentatricopeptide repeat-containing protein At2g36240">
    <location>
        <begin position="1"/>
        <end position="497"/>
    </location>
</feature>
<feature type="repeat" description="PPR 1">
    <location>
        <begin position="156"/>
        <end position="186"/>
    </location>
</feature>
<feature type="repeat" description="PPR 2">
    <location>
        <begin position="192"/>
        <end position="226"/>
    </location>
</feature>
<feature type="repeat" description="PPR 3">
    <location>
        <begin position="227"/>
        <end position="261"/>
    </location>
</feature>
<feature type="repeat" description="PPR 4">
    <location>
        <begin position="262"/>
        <end position="296"/>
    </location>
</feature>
<feature type="repeat" description="PPR 5">
    <location>
        <begin position="297"/>
        <end position="331"/>
    </location>
</feature>
<feature type="repeat" description="PPR 6">
    <location>
        <begin position="332"/>
        <end position="366"/>
    </location>
</feature>
<feature type="repeat" description="PPR 7">
    <location>
        <begin position="367"/>
        <end position="401"/>
    </location>
</feature>
<feature type="repeat" description="PPR 8">
    <location>
        <begin position="402"/>
        <end position="436"/>
    </location>
</feature>
<feature type="repeat" description="PPR 9">
    <location>
        <begin position="437"/>
        <end position="471"/>
    </location>
</feature>
<feature type="sequence conflict" description="In Ref. 3; BAE98941." evidence="1" ref="3">
    <original>R</original>
    <variation>G</variation>
    <location>
        <position position="411"/>
    </location>
</feature>
<proteinExistence type="evidence at transcript level"/>
<sequence length="497" mass="56356">MRWNKKNVISLVSKSHHLPAPITPPLPEIYRIPNPPPKLPEISIPPTLTLSPSPKHSNFVNFLENNLPHHQTLTPQTLLGFLRSKIRNHPLYAHYDFAVFNWAATLDTFRHDHDSFLWMSRSLAATHRFDDLYRLLSFVAANPCPCSSGIFSCPELEPIFRSAIDAYCRARKMDYALLAFDTMKRLIDGKPNVGVYNTVVNGYVKSGDMDKALRFYQRMGKERAKPDVCTFNILINGYCRSSKFDLALDLFREMKEKGCEPNVVSFNTLIRGFLSSGKIEEGVKMAYEMIELGCRFSEATCEILVDGLCREGRVDDACGLVLDLLNKRVLPSEFDYGSLVEKLCGENKAVRAMEMMEELWKKGQTPCFIACTTLVEGLRKSGRTEKASGFMEKMMNAGILPDSVTFNLLLRDLCSSDHSTDANRLRLLASSKGYEPDETTYHVLVSGFTKEGRRKEGEVLVNEMLDKDMLPDIFTYNRLMDGLSCTGKFSRKQVRML</sequence>
<dbReference type="EMBL" id="AC006921">
    <property type="protein sequence ID" value="AAD21441.1"/>
    <property type="molecule type" value="Genomic_DNA"/>
</dbReference>
<dbReference type="EMBL" id="CP002685">
    <property type="protein sequence ID" value="AEC09220.1"/>
    <property type="molecule type" value="Genomic_DNA"/>
</dbReference>
<dbReference type="EMBL" id="AK226848">
    <property type="protein sequence ID" value="BAE98941.1"/>
    <property type="molecule type" value="mRNA"/>
</dbReference>
<dbReference type="EMBL" id="BT014893">
    <property type="protein sequence ID" value="AAT44969.1"/>
    <property type="status" value="ALT_INIT"/>
    <property type="molecule type" value="mRNA"/>
</dbReference>
<dbReference type="EMBL" id="BT015026">
    <property type="protein sequence ID" value="AAT70477.1"/>
    <property type="molecule type" value="mRNA"/>
</dbReference>
<dbReference type="PIR" id="D84778">
    <property type="entry name" value="D84778"/>
</dbReference>
<dbReference type="RefSeq" id="NP_181166.3">
    <property type="nucleotide sequence ID" value="NM_129182.6"/>
</dbReference>
<dbReference type="SMR" id="Q9SJN2"/>
<dbReference type="FunCoup" id="Q9SJN2">
    <property type="interactions" value="167"/>
</dbReference>
<dbReference type="STRING" id="3702.Q9SJN2"/>
<dbReference type="GlyGen" id="Q9SJN2">
    <property type="glycosylation" value="1 site"/>
</dbReference>
<dbReference type="iPTMnet" id="Q9SJN2"/>
<dbReference type="PaxDb" id="3702-AT2G36240.1"/>
<dbReference type="ProteomicsDB" id="250503"/>
<dbReference type="EnsemblPlants" id="AT2G36240.1">
    <property type="protein sequence ID" value="AT2G36240.1"/>
    <property type="gene ID" value="AT2G36240"/>
</dbReference>
<dbReference type="GeneID" id="818196"/>
<dbReference type="Gramene" id="AT2G36240.1">
    <property type="protein sequence ID" value="AT2G36240.1"/>
    <property type="gene ID" value="AT2G36240"/>
</dbReference>
<dbReference type="KEGG" id="ath:AT2G36240"/>
<dbReference type="Araport" id="AT2G36240"/>
<dbReference type="TAIR" id="AT2G36240"/>
<dbReference type="eggNOG" id="KOG4197">
    <property type="taxonomic scope" value="Eukaryota"/>
</dbReference>
<dbReference type="HOGENOM" id="CLU_028941_1_0_1"/>
<dbReference type="InParanoid" id="Q9SJN2"/>
<dbReference type="OMA" id="SCPRIEP"/>
<dbReference type="PhylomeDB" id="Q9SJN2"/>
<dbReference type="PRO" id="PR:Q9SJN2"/>
<dbReference type="Proteomes" id="UP000006548">
    <property type="component" value="Chromosome 2"/>
</dbReference>
<dbReference type="ExpressionAtlas" id="Q9SJN2">
    <property type="expression patterns" value="baseline and differential"/>
</dbReference>
<dbReference type="Gene3D" id="1.25.40.10">
    <property type="entry name" value="Tetratricopeptide repeat domain"/>
    <property type="match status" value="3"/>
</dbReference>
<dbReference type="InterPro" id="IPR002885">
    <property type="entry name" value="Pentatricopeptide_rpt"/>
</dbReference>
<dbReference type="InterPro" id="IPR011990">
    <property type="entry name" value="TPR-like_helical_dom_sf"/>
</dbReference>
<dbReference type="NCBIfam" id="TIGR00756">
    <property type="entry name" value="PPR"/>
    <property type="match status" value="6"/>
</dbReference>
<dbReference type="PANTHER" id="PTHR47941">
    <property type="entry name" value="PENTATRICOPEPTIDE REPEAT-CONTAINING PROTEIN 3, MITOCHONDRIAL"/>
    <property type="match status" value="1"/>
</dbReference>
<dbReference type="Pfam" id="PF01535">
    <property type="entry name" value="PPR"/>
    <property type="match status" value="3"/>
</dbReference>
<dbReference type="Pfam" id="PF13041">
    <property type="entry name" value="PPR_2"/>
    <property type="match status" value="3"/>
</dbReference>
<dbReference type="SUPFAM" id="SSF81901">
    <property type="entry name" value="HCP-like"/>
    <property type="match status" value="1"/>
</dbReference>
<dbReference type="PROSITE" id="PS51375">
    <property type="entry name" value="PPR"/>
    <property type="match status" value="10"/>
</dbReference>
<protein>
    <recommendedName>
        <fullName>Pentatricopeptide repeat-containing protein At2g36240</fullName>
    </recommendedName>
</protein>
<organism>
    <name type="scientific">Arabidopsis thaliana</name>
    <name type="common">Mouse-ear cress</name>
    <dbReference type="NCBI Taxonomy" id="3702"/>
    <lineage>
        <taxon>Eukaryota</taxon>
        <taxon>Viridiplantae</taxon>
        <taxon>Streptophyta</taxon>
        <taxon>Embryophyta</taxon>
        <taxon>Tracheophyta</taxon>
        <taxon>Spermatophyta</taxon>
        <taxon>Magnoliopsida</taxon>
        <taxon>eudicotyledons</taxon>
        <taxon>Gunneridae</taxon>
        <taxon>Pentapetalae</taxon>
        <taxon>rosids</taxon>
        <taxon>malvids</taxon>
        <taxon>Brassicales</taxon>
        <taxon>Brassicaceae</taxon>
        <taxon>Camelineae</taxon>
        <taxon>Arabidopsis</taxon>
    </lineage>
</organism>